<accession>Q09269</accession>
<organism>
    <name type="scientific">Caenorhabditis elegans</name>
    <dbReference type="NCBI Taxonomy" id="6239"/>
    <lineage>
        <taxon>Eukaryota</taxon>
        <taxon>Metazoa</taxon>
        <taxon>Ecdysozoa</taxon>
        <taxon>Nematoda</taxon>
        <taxon>Chromadorea</taxon>
        <taxon>Rhabditida</taxon>
        <taxon>Rhabditina</taxon>
        <taxon>Rhabditomorpha</taxon>
        <taxon>Rhabditoidea</taxon>
        <taxon>Rhabditidae</taxon>
        <taxon>Peloderinae</taxon>
        <taxon>Caenorhabditis</taxon>
    </lineage>
</organism>
<evidence type="ECO:0000250" key="1">
    <source>
        <dbReference type="UniProtKB" id="Q96QK8"/>
    </source>
</evidence>
<evidence type="ECO:0000256" key="2">
    <source>
        <dbReference type="SAM" id="MobiDB-lite"/>
    </source>
</evidence>
<evidence type="ECO:0000312" key="3">
    <source>
        <dbReference type="WormBase" id="C34C12.4"/>
    </source>
</evidence>
<sequence length="101" mass="11215">MSDPCECFFDHESAMQRLLAMLRNSQADCTDTGCDNDGLSREGGNTMMMWTLLWTFMAMALYVMRPNSMRSDRRTADDAAIEKPTGSSDDNTPPPPPPSAM</sequence>
<protein>
    <recommendedName>
        <fullName evidence="3">Small integral membrane protein 14</fullName>
    </recommendedName>
    <alternativeName>
        <fullName evidence="1">SMIM14 homolog</fullName>
    </alternativeName>
</protein>
<name>YQF4_CAEEL</name>
<reference key="1">
    <citation type="journal article" date="1998" name="Science">
        <title>Genome sequence of the nematode C. elegans: a platform for investigating biology.</title>
        <authorList>
            <consortium name="The C. elegans sequencing consortium"/>
        </authorList>
    </citation>
    <scope>NUCLEOTIDE SEQUENCE [LARGE SCALE GENOMIC DNA]</scope>
    <source>
        <strain>Bristol N2</strain>
    </source>
</reference>
<keyword id="KW-1185">Reference proteome</keyword>
<dbReference type="EMBL" id="Z46996">
    <property type="protein sequence ID" value="CAA87095.2"/>
    <property type="molecule type" value="Genomic_DNA"/>
</dbReference>
<dbReference type="PIR" id="T19696">
    <property type="entry name" value="T19696"/>
</dbReference>
<dbReference type="BioGRID" id="48031">
    <property type="interactions" value="2"/>
</dbReference>
<dbReference type="FunCoup" id="Q09269">
    <property type="interactions" value="2256"/>
</dbReference>
<dbReference type="IntAct" id="Q09269">
    <property type="interactions" value="2"/>
</dbReference>
<dbReference type="STRING" id="6239.C34C12.4.1"/>
<dbReference type="PaxDb" id="6239-C34C12.4.1"/>
<dbReference type="PeptideAtlas" id="Q09269"/>
<dbReference type="EnsemblMetazoa" id="C34C12.4.1">
    <property type="protein sequence ID" value="C34C12.4.1"/>
    <property type="gene ID" value="WBGene00007923"/>
</dbReference>
<dbReference type="KEGG" id="cel:CELE_C34C12.4"/>
<dbReference type="UCSC" id="C34C12.4.1">
    <property type="organism name" value="c. elegans"/>
</dbReference>
<dbReference type="AGR" id="WB:WBGene00007923"/>
<dbReference type="CTD" id="183200"/>
<dbReference type="WormBase" id="C34C12.4">
    <property type="protein sequence ID" value="CE31434"/>
    <property type="gene ID" value="WBGene00007923"/>
    <property type="gene designation" value="smim-14"/>
</dbReference>
<dbReference type="eggNOG" id="ENOG502S7T0">
    <property type="taxonomic scope" value="Eukaryota"/>
</dbReference>
<dbReference type="GeneTree" id="ENSGT00390000018294"/>
<dbReference type="HOGENOM" id="CLU_152284_0_1_1"/>
<dbReference type="InParanoid" id="Q09269"/>
<dbReference type="OMA" id="ACTDTEC"/>
<dbReference type="OrthoDB" id="10054061at2759"/>
<dbReference type="PhylomeDB" id="Q09269"/>
<dbReference type="PRO" id="PR:Q09269"/>
<dbReference type="Proteomes" id="UP000001940">
    <property type="component" value="Chromosome III"/>
</dbReference>
<dbReference type="Bgee" id="WBGene00007923">
    <property type="expression patterns" value="Expressed in larva and 4 other cell types or tissues"/>
</dbReference>
<dbReference type="GO" id="GO:0005783">
    <property type="term" value="C:endoplasmic reticulum"/>
    <property type="evidence" value="ECO:0000318"/>
    <property type="project" value="GO_Central"/>
</dbReference>
<dbReference type="InterPro" id="IPR020309">
    <property type="entry name" value="Uncharacterised_CD034/YQF4"/>
</dbReference>
<dbReference type="PANTHER" id="PTHR31019">
    <property type="entry name" value="SMALL INTEGRAL MEMBRANE PROTEIN 14"/>
    <property type="match status" value="1"/>
</dbReference>
<dbReference type="PANTHER" id="PTHR31019:SF1">
    <property type="entry name" value="SMALL INTEGRAL MEMBRANE PROTEIN 14"/>
    <property type="match status" value="1"/>
</dbReference>
<dbReference type="Pfam" id="PF11027">
    <property type="entry name" value="DUF2615"/>
    <property type="match status" value="1"/>
</dbReference>
<gene>
    <name evidence="3" type="primary">smim-14</name>
    <name evidence="3" type="ORF">C34C12.4</name>
</gene>
<proteinExistence type="predicted"/>
<feature type="chain" id="PRO_0000065221" description="Small integral membrane protein 14">
    <location>
        <begin position="1"/>
        <end position="101"/>
    </location>
</feature>
<feature type="region of interest" description="Disordered" evidence="2">
    <location>
        <begin position="71"/>
        <end position="101"/>
    </location>
</feature>
<feature type="compositionally biased region" description="Basic and acidic residues" evidence="2">
    <location>
        <begin position="71"/>
        <end position="81"/>
    </location>
</feature>
<feature type="compositionally biased region" description="Pro residues" evidence="2">
    <location>
        <begin position="92"/>
        <end position="101"/>
    </location>
</feature>